<keyword id="KW-0150">Chloroplast</keyword>
<keyword id="KW-0934">Plastid</keyword>
<proteinExistence type="inferred from homology"/>
<sequence>MRNNIKSDIWSFHNKFRFDKKIILLLIRVSIKFNTKLVNYSRRPLFLDLLSVLTKKILFSLAVKSFKDTFITLKIRNCSSLFLKHNSLLVFNSIILKLLKNFYDVLGFSSYEEKKFLILFQNESLYKLCAFEFRDLTEIVFTFIIFGEIHDKDYSGKVCSNELNFRCLENFLIRVCDCVVYFSIKYNYNSSILYALRGHSWIKSFKDKQRLFIYLLLSSYFHSIIDTTQKLNNSIFRGWIVRGTYIDSISFEQFSLTSLKKLPKISLLVFLLINVIDTVIPQFNLFILFLRKAITFIFSDLIIKTNLL</sequence>
<feature type="chain" id="PRO_0000217388" description="Uncharacterized protein ycf55">
    <location>
        <begin position="1"/>
        <end position="308"/>
    </location>
</feature>
<gene>
    <name type="primary">ycf55</name>
    <name type="synonym">ycf5</name>
</gene>
<name>YCF55_CYACA</name>
<accession>O19888</accession>
<comment type="subcellular location">
    <subcellularLocation>
        <location>Plastid</location>
        <location>Chloroplast</location>
    </subcellularLocation>
</comment>
<comment type="similarity">
    <text evidence="1">Belongs to the ycf55 family.</text>
</comment>
<geneLocation type="chloroplast"/>
<organism>
    <name type="scientific">Cyanidium caldarium</name>
    <name type="common">Red alga</name>
    <dbReference type="NCBI Taxonomy" id="2771"/>
    <lineage>
        <taxon>Eukaryota</taxon>
        <taxon>Rhodophyta</taxon>
        <taxon>Bangiophyceae</taxon>
        <taxon>Cyanidiales</taxon>
        <taxon>Cyanidiaceae</taxon>
        <taxon>Cyanidium</taxon>
    </lineage>
</organism>
<dbReference type="EMBL" id="AF022186">
    <property type="protein sequence ID" value="AAB82701.1"/>
    <property type="molecule type" value="Genomic_DNA"/>
</dbReference>
<dbReference type="PIR" id="T11956">
    <property type="entry name" value="T11956"/>
</dbReference>
<dbReference type="RefSeq" id="NP_045060.1">
    <property type="nucleotide sequence ID" value="NC_001840.1"/>
</dbReference>
<dbReference type="GeneID" id="800277"/>
<dbReference type="GO" id="GO:0009507">
    <property type="term" value="C:chloroplast"/>
    <property type="evidence" value="ECO:0007669"/>
    <property type="project" value="UniProtKB-SubCell"/>
</dbReference>
<dbReference type="InterPro" id="IPR017077">
    <property type="entry name" value="Uncharacterised_Ycf55_algae"/>
</dbReference>
<dbReference type="PIRSF" id="PIRSF036962">
    <property type="entry name" value="UCP036962_SignTr_Ycf55"/>
    <property type="match status" value="1"/>
</dbReference>
<reference key="1">
    <citation type="journal article" date="2000" name="J. Mol. Evol.">
        <title>The structure and gene repertoire of an ancient red algal plastid genome.</title>
        <authorList>
            <person name="Gloeckner G."/>
            <person name="Rosenthal A."/>
            <person name="Valentin K.-U."/>
        </authorList>
    </citation>
    <scope>NUCLEOTIDE SEQUENCE [LARGE SCALE GENOMIC DNA]</scope>
    <source>
        <strain>RK-1</strain>
    </source>
</reference>
<protein>
    <recommendedName>
        <fullName>Uncharacterized protein ycf55</fullName>
    </recommendedName>
</protein>
<evidence type="ECO:0000305" key="1"/>